<gene>
    <name evidence="1" type="primary">RNF152</name>
    <name evidence="5" type="ORF">PANDA_005868</name>
</gene>
<organism>
    <name type="scientific">Ailuropoda melanoleuca</name>
    <name type="common">Giant panda</name>
    <dbReference type="NCBI Taxonomy" id="9646"/>
    <lineage>
        <taxon>Eukaryota</taxon>
        <taxon>Metazoa</taxon>
        <taxon>Chordata</taxon>
        <taxon>Craniata</taxon>
        <taxon>Vertebrata</taxon>
        <taxon>Euteleostomi</taxon>
        <taxon>Mammalia</taxon>
        <taxon>Eutheria</taxon>
        <taxon>Laurasiatheria</taxon>
        <taxon>Carnivora</taxon>
        <taxon>Caniformia</taxon>
        <taxon>Ursidae</taxon>
        <taxon>Ailuropoda</taxon>
    </lineage>
</organism>
<evidence type="ECO:0000250" key="1">
    <source>
        <dbReference type="UniProtKB" id="Q8N8N0"/>
    </source>
</evidence>
<evidence type="ECO:0000255" key="2"/>
<evidence type="ECO:0000255" key="3">
    <source>
        <dbReference type="PROSITE-ProRule" id="PRU00175"/>
    </source>
</evidence>
<evidence type="ECO:0000305" key="4"/>
<evidence type="ECO:0000312" key="5">
    <source>
        <dbReference type="EMBL" id="EFB24541.1"/>
    </source>
</evidence>
<proteinExistence type="inferred from homology"/>
<dbReference type="EC" id="2.3.2.27" evidence="1"/>
<dbReference type="EMBL" id="GL192540">
    <property type="protein sequence ID" value="EFB24541.1"/>
    <property type="molecule type" value="Genomic_DNA"/>
</dbReference>
<dbReference type="RefSeq" id="XP_019653372.1">
    <property type="nucleotide sequence ID" value="XM_019797813.1"/>
</dbReference>
<dbReference type="RefSeq" id="XP_034498562.1">
    <property type="nucleotide sequence ID" value="XM_034642671.1"/>
</dbReference>
<dbReference type="RefSeq" id="XP_034498563.1">
    <property type="nucleotide sequence ID" value="XM_034642672.1"/>
</dbReference>
<dbReference type="RefSeq" id="XP_034498564.1">
    <property type="nucleotide sequence ID" value="XM_034642673.1"/>
</dbReference>
<dbReference type="RefSeq" id="XP_034498565.1">
    <property type="nucleotide sequence ID" value="XM_034642674.1"/>
</dbReference>
<dbReference type="SMR" id="D2H6Z0"/>
<dbReference type="STRING" id="9646.ENSAMEP00000020126"/>
<dbReference type="Ensembl" id="ENSAMET00000020895.2">
    <property type="protein sequence ID" value="ENSAMEP00000020126.1"/>
    <property type="gene ID" value="ENSAMEG00000019059.2"/>
</dbReference>
<dbReference type="GeneID" id="100463900"/>
<dbReference type="eggNOG" id="KOG2177">
    <property type="taxonomic scope" value="Eukaryota"/>
</dbReference>
<dbReference type="GeneTree" id="ENSGT00730000111317"/>
<dbReference type="HOGENOM" id="CLU_1414689_0_0_1"/>
<dbReference type="InParanoid" id="D2H6Z0"/>
<dbReference type="OMA" id="REIRCPW"/>
<dbReference type="OrthoDB" id="6106880at2759"/>
<dbReference type="TreeFam" id="TF331690"/>
<dbReference type="UniPathway" id="UPA00143"/>
<dbReference type="Proteomes" id="UP000008912">
    <property type="component" value="Unassembled WGS sequence"/>
</dbReference>
<dbReference type="GO" id="GO:0005765">
    <property type="term" value="C:lysosomal membrane"/>
    <property type="evidence" value="ECO:0000250"/>
    <property type="project" value="UniProtKB"/>
</dbReference>
<dbReference type="GO" id="GO:0005764">
    <property type="term" value="C:lysosome"/>
    <property type="evidence" value="ECO:0000250"/>
    <property type="project" value="UniProtKB"/>
</dbReference>
<dbReference type="GO" id="GO:0031090">
    <property type="term" value="C:organelle membrane"/>
    <property type="evidence" value="ECO:0000250"/>
    <property type="project" value="UniProtKB"/>
</dbReference>
<dbReference type="GO" id="GO:0031267">
    <property type="term" value="F:small GTPase binding"/>
    <property type="evidence" value="ECO:0007669"/>
    <property type="project" value="Ensembl"/>
</dbReference>
<dbReference type="GO" id="GO:0061630">
    <property type="term" value="F:ubiquitin protein ligase activity"/>
    <property type="evidence" value="ECO:0007669"/>
    <property type="project" value="Ensembl"/>
</dbReference>
<dbReference type="GO" id="GO:0004842">
    <property type="term" value="F:ubiquitin-protein transferase activity"/>
    <property type="evidence" value="ECO:0000250"/>
    <property type="project" value="UniProtKB"/>
</dbReference>
<dbReference type="GO" id="GO:0008270">
    <property type="term" value="F:zinc ion binding"/>
    <property type="evidence" value="ECO:0007669"/>
    <property type="project" value="UniProtKB-KW"/>
</dbReference>
<dbReference type="GO" id="GO:0006915">
    <property type="term" value="P:apoptotic process"/>
    <property type="evidence" value="ECO:0007669"/>
    <property type="project" value="UniProtKB-KW"/>
</dbReference>
<dbReference type="GO" id="GO:0034198">
    <property type="term" value="P:cellular response to amino acid starvation"/>
    <property type="evidence" value="ECO:0000250"/>
    <property type="project" value="UniProtKB"/>
</dbReference>
<dbReference type="GO" id="GO:1904262">
    <property type="term" value="P:negative regulation of TORC1 signaling"/>
    <property type="evidence" value="ECO:0000250"/>
    <property type="project" value="UniProtKB"/>
</dbReference>
<dbReference type="GO" id="GO:0010508">
    <property type="term" value="P:positive regulation of autophagy"/>
    <property type="evidence" value="ECO:0000250"/>
    <property type="project" value="UniProtKB"/>
</dbReference>
<dbReference type="GO" id="GO:0070936">
    <property type="term" value="P:protein K48-linked ubiquitination"/>
    <property type="evidence" value="ECO:0000250"/>
    <property type="project" value="UniProtKB"/>
</dbReference>
<dbReference type="GO" id="GO:0070534">
    <property type="term" value="P:protein K63-linked ubiquitination"/>
    <property type="evidence" value="ECO:0000250"/>
    <property type="project" value="UniProtKB"/>
</dbReference>
<dbReference type="GO" id="GO:0006513">
    <property type="term" value="P:protein monoubiquitination"/>
    <property type="evidence" value="ECO:0000250"/>
    <property type="project" value="UniProtKB"/>
</dbReference>
<dbReference type="CDD" id="cd16548">
    <property type="entry name" value="RING-HC_RNF152"/>
    <property type="match status" value="1"/>
</dbReference>
<dbReference type="FunFam" id="3.30.40.10:FF:000197">
    <property type="entry name" value="E3 ubiquitin-protein ligase RNF152"/>
    <property type="match status" value="1"/>
</dbReference>
<dbReference type="Gene3D" id="3.30.40.10">
    <property type="entry name" value="Zinc/RING finger domain, C3HC4 (zinc finger)"/>
    <property type="match status" value="1"/>
</dbReference>
<dbReference type="InterPro" id="IPR033609">
    <property type="entry name" value="RING_RNF152"/>
</dbReference>
<dbReference type="InterPro" id="IPR045744">
    <property type="entry name" value="RNF152_C"/>
</dbReference>
<dbReference type="InterPro" id="IPR001841">
    <property type="entry name" value="Znf_RING"/>
</dbReference>
<dbReference type="InterPro" id="IPR013083">
    <property type="entry name" value="Znf_RING/FYVE/PHD"/>
</dbReference>
<dbReference type="PANTHER" id="PTHR25464:SF1">
    <property type="entry name" value="E3 UBIQUITIN-PROTEIN LIGASE RNF152"/>
    <property type="match status" value="1"/>
</dbReference>
<dbReference type="PANTHER" id="PTHR25464">
    <property type="entry name" value="TRIPARTITE MOTIF-CONTAINING PROTEIN 2-LIKE PROTEIN"/>
    <property type="match status" value="1"/>
</dbReference>
<dbReference type="Pfam" id="PF19325">
    <property type="entry name" value="RNF152_C"/>
    <property type="match status" value="1"/>
</dbReference>
<dbReference type="Pfam" id="PF14634">
    <property type="entry name" value="zf-RING_5"/>
    <property type="match status" value="1"/>
</dbReference>
<dbReference type="SMART" id="SM00184">
    <property type="entry name" value="RING"/>
    <property type="match status" value="1"/>
</dbReference>
<dbReference type="SUPFAM" id="SSF57850">
    <property type="entry name" value="RING/U-box"/>
    <property type="match status" value="1"/>
</dbReference>
<dbReference type="PROSITE" id="PS50089">
    <property type="entry name" value="ZF_RING_2"/>
    <property type="match status" value="1"/>
</dbReference>
<name>RN152_AILME</name>
<feature type="chain" id="PRO_0000405834" description="E3 ubiquitin-protein ligase RNF152">
    <location>
        <begin position="1"/>
        <end position="203"/>
    </location>
</feature>
<feature type="transmembrane region" description="Helical" evidence="2">
    <location>
        <begin position="167"/>
        <end position="187"/>
    </location>
</feature>
<feature type="zinc finger region" description="RING-type" evidence="3">
    <location>
        <begin position="12"/>
        <end position="55"/>
    </location>
</feature>
<feature type="region of interest" description="Necessary for interaction with RRAGA" evidence="1">
    <location>
        <begin position="106"/>
        <end position="165"/>
    </location>
</feature>
<sequence length="203" mass="22280">METLSQDSLLECQICFNYYSPRRRPKLLDCKHTCCSVCLQQMRTSQKDVRCPWCRGITKLPPGFSVAQLPDDPEVLAVIAIPHASEHTPVFIKLPSNGCYMLPLPISKERALLPGDMGCRLLPGSQQKSVTVVTVPAEQRPLQGGAPQEAVEEEPDRRGVAKSSTWSGVCTVILVACVLVFLLGIVLHNMSCISKRFTVISCG</sequence>
<accession>D2H6Z0</accession>
<reference key="1">
    <citation type="journal article" date="2010" name="Nature">
        <title>The sequence and de novo assembly of the giant panda genome.</title>
        <authorList>
            <person name="Li R."/>
            <person name="Fan W."/>
            <person name="Tian G."/>
            <person name="Zhu H."/>
            <person name="He L."/>
            <person name="Cai J."/>
            <person name="Huang Q."/>
            <person name="Cai Q."/>
            <person name="Li B."/>
            <person name="Bai Y."/>
            <person name="Zhang Z."/>
            <person name="Zhang Y."/>
            <person name="Wang W."/>
            <person name="Li J."/>
            <person name="Wei F."/>
            <person name="Li H."/>
            <person name="Jian M."/>
            <person name="Li J."/>
            <person name="Zhang Z."/>
            <person name="Nielsen R."/>
            <person name="Li D."/>
            <person name="Gu W."/>
            <person name="Yang Z."/>
            <person name="Xuan Z."/>
            <person name="Ryder O.A."/>
            <person name="Leung F.C."/>
            <person name="Zhou Y."/>
            <person name="Cao J."/>
            <person name="Sun X."/>
            <person name="Fu Y."/>
            <person name="Fang X."/>
            <person name="Guo X."/>
            <person name="Wang B."/>
            <person name="Hou R."/>
            <person name="Shen F."/>
            <person name="Mu B."/>
            <person name="Ni P."/>
            <person name="Lin R."/>
            <person name="Qian W."/>
            <person name="Wang G."/>
            <person name="Yu C."/>
            <person name="Nie W."/>
            <person name="Wang J."/>
            <person name="Wu Z."/>
            <person name="Liang H."/>
            <person name="Min J."/>
            <person name="Wu Q."/>
            <person name="Cheng S."/>
            <person name="Ruan J."/>
            <person name="Wang M."/>
            <person name="Shi Z."/>
            <person name="Wen M."/>
            <person name="Liu B."/>
            <person name="Ren X."/>
            <person name="Zheng H."/>
            <person name="Dong D."/>
            <person name="Cook K."/>
            <person name="Shan G."/>
            <person name="Zhang H."/>
            <person name="Kosiol C."/>
            <person name="Xie X."/>
            <person name="Lu Z."/>
            <person name="Zheng H."/>
            <person name="Li Y."/>
            <person name="Steiner C.C."/>
            <person name="Lam T.T."/>
            <person name="Lin S."/>
            <person name="Zhang Q."/>
            <person name="Li G."/>
            <person name="Tian J."/>
            <person name="Gong T."/>
            <person name="Liu H."/>
            <person name="Zhang D."/>
            <person name="Fang L."/>
            <person name="Ye C."/>
            <person name="Zhang J."/>
            <person name="Hu W."/>
            <person name="Xu A."/>
            <person name="Ren Y."/>
            <person name="Zhang G."/>
            <person name="Bruford M.W."/>
            <person name="Li Q."/>
            <person name="Ma L."/>
            <person name="Guo Y."/>
            <person name="An N."/>
            <person name="Hu Y."/>
            <person name="Zheng Y."/>
            <person name="Shi Y."/>
            <person name="Li Z."/>
            <person name="Liu Q."/>
            <person name="Chen Y."/>
            <person name="Zhao J."/>
            <person name="Qu N."/>
            <person name="Zhao S."/>
            <person name="Tian F."/>
            <person name="Wang X."/>
            <person name="Wang H."/>
            <person name="Xu L."/>
            <person name="Liu X."/>
            <person name="Vinar T."/>
            <person name="Wang Y."/>
            <person name="Lam T.W."/>
            <person name="Yiu S.M."/>
            <person name="Liu S."/>
            <person name="Zhang H."/>
            <person name="Li D."/>
            <person name="Huang Y."/>
            <person name="Wang X."/>
            <person name="Yang G."/>
            <person name="Jiang Z."/>
            <person name="Wang J."/>
            <person name="Qin N."/>
            <person name="Li L."/>
            <person name="Li J."/>
            <person name="Bolund L."/>
            <person name="Kristiansen K."/>
            <person name="Wong G.K."/>
            <person name="Olson M."/>
            <person name="Zhang X."/>
            <person name="Li S."/>
            <person name="Yang H."/>
            <person name="Wang J."/>
            <person name="Wang J."/>
        </authorList>
    </citation>
    <scope>NUCLEOTIDE SEQUENCE [LARGE SCALE GENOMIC DNA]</scope>
</reference>
<keyword id="KW-0053">Apoptosis</keyword>
<keyword id="KW-0458">Lysosome</keyword>
<keyword id="KW-0472">Membrane</keyword>
<keyword id="KW-0479">Metal-binding</keyword>
<keyword id="KW-1185">Reference proteome</keyword>
<keyword id="KW-0808">Transferase</keyword>
<keyword id="KW-0812">Transmembrane</keyword>
<keyword id="KW-1133">Transmembrane helix</keyword>
<keyword id="KW-0832">Ubl conjugation</keyword>
<keyword id="KW-0833">Ubl conjugation pathway</keyword>
<keyword id="KW-0862">Zinc</keyword>
<keyword id="KW-0863">Zinc-finger</keyword>
<comment type="function">
    <text evidence="1">E3 ubiquitin-protein ligase that acts as a negative regulator of mTORC1 signaling by mediating ubiquitination of RagA/RRAGA and RHEB. Catalyzes 'Lys-63'-linked polyubiquitination of RagA/RRAGA in response to amino acid starvation, thereby regulating mTORC1 signaling. Also mediates monoubiquitination of RHEB, promoting its association with the TSC-TBC complex and subsequent inhibition. Also mediates 'Lys-48'-linked polyubiquitination of target proteins and their subsequent targeting to the proteasome for degradation. Induces apoptosis when overexpressed.</text>
</comment>
<comment type="catalytic activity">
    <reaction evidence="1">
        <text>S-ubiquitinyl-[E2 ubiquitin-conjugating enzyme]-L-cysteine + [acceptor protein]-L-lysine = [E2 ubiquitin-conjugating enzyme]-L-cysteine + N(6)-ubiquitinyl-[acceptor protein]-L-lysine.</text>
        <dbReference type="EC" id="2.3.2.27"/>
    </reaction>
</comment>
<comment type="pathway">
    <text evidence="1">Protein modification; protein ubiquitination.</text>
</comment>
<comment type="subunit">
    <text evidence="1">Interacts with RRAGA (inactive GDP-bound form); stimulated by amino acid starvation.</text>
</comment>
<comment type="subcellular location">
    <subcellularLocation>
        <location evidence="1">Lysosome membrane</location>
        <topology evidence="1">Single-pass membrane protein</topology>
    </subcellularLocation>
</comment>
<comment type="PTM">
    <text evidence="1">Ubiquitinated. Autoubiquitinated in vitro, leading to its degradation by the proteasome.</text>
</comment>
<comment type="similarity">
    <text evidence="4">Belongs to the RNF152 family.</text>
</comment>
<protein>
    <recommendedName>
        <fullName evidence="4">E3 ubiquitin-protein ligase RNF152</fullName>
        <ecNumber evidence="1">2.3.2.27</ecNumber>
    </recommendedName>
    <alternativeName>
        <fullName evidence="1">RING finger protein 152</fullName>
    </alternativeName>
    <alternativeName>
        <fullName evidence="4">RING-type E3 ubiquitin transferase RNF152</fullName>
    </alternativeName>
</protein>